<dbReference type="EC" id="2.3.1.-" evidence="1"/>
<dbReference type="EMBL" id="M27399">
    <property type="protein sequence ID" value="AAA21921.1"/>
    <property type="molecule type" value="Genomic_DNA"/>
</dbReference>
<dbReference type="EMBL" id="X16829">
    <property type="protein sequence ID" value="CAA34730.1"/>
    <property type="molecule type" value="Genomic_DNA"/>
</dbReference>
<dbReference type="PIR" id="B37205">
    <property type="entry name" value="B37205"/>
</dbReference>
<dbReference type="RefSeq" id="WP_005545611.1">
    <property type="nucleotide sequence ID" value="NZ_VSEW01000001.1"/>
</dbReference>
<dbReference type="SMR" id="P16461"/>
<dbReference type="STRING" id="714.ACT75_09600"/>
<dbReference type="eggNOG" id="COG2994">
    <property type="taxonomic scope" value="Bacteria"/>
</dbReference>
<dbReference type="OrthoDB" id="8596436at2"/>
<dbReference type="GO" id="GO:0005737">
    <property type="term" value="C:cytoplasm"/>
    <property type="evidence" value="ECO:0007669"/>
    <property type="project" value="UniProtKB-SubCell"/>
</dbReference>
<dbReference type="GO" id="GO:0016746">
    <property type="term" value="F:acyltransferase activity"/>
    <property type="evidence" value="ECO:0007669"/>
    <property type="project" value="UniProtKB-KW"/>
</dbReference>
<dbReference type="GO" id="GO:0009404">
    <property type="term" value="P:toxin metabolic process"/>
    <property type="evidence" value="ECO:0007669"/>
    <property type="project" value="InterPro"/>
</dbReference>
<dbReference type="InterPro" id="IPR003996">
    <property type="entry name" value="RTX_toxin-activating_protC_bac"/>
</dbReference>
<dbReference type="Pfam" id="PF02794">
    <property type="entry name" value="HlyC"/>
    <property type="match status" value="1"/>
</dbReference>
<dbReference type="PRINTS" id="PR01489">
    <property type="entry name" value="RTXTOXINC"/>
</dbReference>
<feature type="chain" id="PRO_0000217878" description="Leukotoxin-activating lysine-acyltransferase LtxC">
    <location>
        <begin position="1"/>
        <end position="168"/>
    </location>
</feature>
<feature type="active site" evidence="1">
    <location>
        <position position="23"/>
    </location>
</feature>
<feature type="active site" evidence="1">
    <location>
        <position position="92"/>
    </location>
</feature>
<feature type="sequence conflict" description="In Ref. 2; CAA34730." evidence="7" ref="2">
    <original>M</original>
    <variation>V</variation>
    <location>
        <position position="9"/>
    </location>
</feature>
<sequence>MEKNNNFEMLGYVAWLWANSPLHRNWSLSLLAINVLPAIQYGQYTLLMRDGVPIAFCSWANLSLENEIKYLEDVSSLVYDDWNSGDRKWFIDWIAPFGHNYVLYKHMRKSFPYDLFRSIRVYKGSSEGKITEFHGGKVDKQLANKIFQQYHFELINELKNKSEVISIN</sequence>
<reference key="1">
    <citation type="journal article" date="1989" name="J. Biol. Chem.">
        <title>Analysis of the Actinobacillus actinomycetemcomitans leukotoxin gene. Delineation of unique features and comparison to homologous toxins.</title>
        <authorList>
            <person name="Lally E.T."/>
            <person name="Golub E.E."/>
            <person name="Kieba I.R."/>
            <person name="Taichman N.S."/>
            <person name="Rosenbloom J."/>
            <person name="Rosenbloom J.C."/>
            <person name="Gibson C.W."/>
            <person name="Demuth D.R."/>
        </authorList>
    </citation>
    <scope>NUCLEOTIDE SEQUENCE [GENOMIC DNA]</scope>
    <source>
        <strain>JP2</strain>
    </source>
</reference>
<reference key="2">
    <citation type="journal article" date="1990" name="Infect. Immun.">
        <title>Nucleotide sequence of the leukotoxin gene from Actinobacillus actinomycetemcomitans: homology to the alpha-hemolysin/leukotoxin gene family.</title>
        <authorList>
            <person name="Kraig E."/>
            <person name="Dailey T."/>
            <person name="Kolodrubetz D."/>
        </authorList>
    </citation>
    <scope>NUCLEOTIDE SEQUENCE [GENOMIC DNA]</scope>
    <source>
        <strain>JP2</strain>
    </source>
</reference>
<reference key="3">
    <citation type="journal article" date="1994" name="Infect. Immun.">
        <title>Regulation of Actinobacillus actinomycetemcomitans leukotoxin expression: analysis of the promoter regions of leukotoxic and minimally leukotoxic strains.</title>
        <authorList>
            <person name="Brogan J.M."/>
            <person name="Lally E.T."/>
            <person name="Poulsen K."/>
            <person name="Kilian M."/>
            <person name="Demuth D.R."/>
        </authorList>
    </citation>
    <scope>INDUCTION</scope>
    <scope>GENE NAME</scope>
    <source>
        <strain>652</strain>
        <strain>JP2</strain>
    </source>
</reference>
<reference key="4">
    <citation type="journal article" date="2009" name="Gene">
        <title>Aggregatibacter actinomycetemcomitans LtxC is required for leukotoxin activity and initial interaction between toxin and host cells.</title>
        <authorList>
            <person name="Balashova N.V."/>
            <person name="Shah C."/>
            <person name="Patel J.K."/>
            <person name="Megalla S."/>
            <person name="Kachlany S.C."/>
        </authorList>
    </citation>
    <scope>FUNCTION IN MODIFICATION OF LTXA</scope>
    <scope>DISRUPTION PHENOTYPE</scope>
    <source>
        <strain>JP2N</strain>
    </source>
</reference>
<comment type="function">
    <text evidence="2">Required for full activity and modification of the LtxA leukotoxin. Involved in fatty acid modification of the protoxin at two internal lysine residues, thereby converting it to the active toxin.</text>
</comment>
<comment type="catalytic activity">
    <reaction evidence="1">
        <text>a fatty acyl-[ACP] + L-lysyl-[protein] = N(6)-(fatty acyl)-L-lysyl-[protein] + holo-[ACP] + H(+)</text>
        <dbReference type="Rhea" id="RHEA:70667"/>
        <dbReference type="Rhea" id="RHEA-COMP:9685"/>
        <dbReference type="Rhea" id="RHEA-COMP:9752"/>
        <dbReference type="Rhea" id="RHEA-COMP:14125"/>
        <dbReference type="Rhea" id="RHEA-COMP:17946"/>
        <dbReference type="ChEBI" id="CHEBI:15378"/>
        <dbReference type="ChEBI" id="CHEBI:29969"/>
        <dbReference type="ChEBI" id="CHEBI:64479"/>
        <dbReference type="ChEBI" id="CHEBI:138651"/>
        <dbReference type="ChEBI" id="CHEBI:189854"/>
    </reaction>
    <physiologicalReaction direction="left-to-right" evidence="1">
        <dbReference type="Rhea" id="RHEA:70668"/>
    </physiologicalReaction>
</comment>
<comment type="subcellular location">
    <subcellularLocation>
        <location evidence="7">Cytoplasm</location>
    </subcellularLocation>
</comment>
<comment type="induction">
    <text evidence="3">Levels of toxin expression vary greatly among strains. Highly leukotoxic strains (JP2-type strains) produce more LtxA protein and ltx mRNA than minimally leukotoxic strains (652-type strains). Variations are probably due to different types of promoters.</text>
</comment>
<comment type="disruption phenotype">
    <text evidence="2">Mutants can express and secrete the LtxA leukotoxin, but LtxA lacks both leukotoxic and erythrolytic activities, and is unable to cause a change in intracellular calcium levels in host cells.</text>
</comment>
<comment type="similarity">
    <text evidence="7">Belongs to the RTX toxin acyltransferase family.</text>
</comment>
<proteinExistence type="evidence at protein level"/>
<name>LTXC_AGGAC</name>
<accession>P16461</accession>
<keyword id="KW-0012">Acyltransferase</keyword>
<keyword id="KW-0963">Cytoplasm</keyword>
<keyword id="KW-0808">Transferase</keyword>
<gene>
    <name evidence="6" type="primary">ltxC</name>
    <name evidence="5" type="synonym">AaLtc</name>
    <name evidence="4" type="synonym">lktC</name>
</gene>
<protein>
    <recommendedName>
        <fullName>Leukotoxin-activating lysine-acyltransferase LtxC</fullName>
        <shortName>Leukotoxin C</shortName>
        <shortName>Toxin-activating protein C</shortName>
        <ecNumber evidence="1">2.3.1.-</ecNumber>
    </recommendedName>
</protein>
<evidence type="ECO:0000250" key="1">
    <source>
        <dbReference type="UniProtKB" id="P55132"/>
    </source>
</evidence>
<evidence type="ECO:0000269" key="2">
    <source>
    </source>
</evidence>
<evidence type="ECO:0000269" key="3">
    <source>
    </source>
</evidence>
<evidence type="ECO:0000303" key="4">
    <source>
    </source>
</evidence>
<evidence type="ECO:0000303" key="5">
    <source>
    </source>
</evidence>
<evidence type="ECO:0000303" key="6">
    <source>
    </source>
</evidence>
<evidence type="ECO:0000305" key="7"/>
<organism>
    <name type="scientific">Aggregatibacter actinomycetemcomitans</name>
    <name type="common">Actinobacillus actinomycetemcomitans</name>
    <name type="synonym">Haemophilus actinomycetemcomitans</name>
    <dbReference type="NCBI Taxonomy" id="714"/>
    <lineage>
        <taxon>Bacteria</taxon>
        <taxon>Pseudomonadati</taxon>
        <taxon>Pseudomonadota</taxon>
        <taxon>Gammaproteobacteria</taxon>
        <taxon>Pasteurellales</taxon>
        <taxon>Pasteurellaceae</taxon>
        <taxon>Aggregatibacter</taxon>
    </lineage>
</organism>